<feature type="initiator methionine" description="Removed" evidence="3 5">
    <location>
        <position position="1"/>
    </location>
</feature>
<feature type="chain" id="PRO_0000221272" description="Histone H3 type 3">
    <location>
        <begin position="2"/>
        <end position="135"/>
    </location>
</feature>
<feature type="region of interest" description="Disordered" evidence="2">
    <location>
        <begin position="1"/>
        <end position="40"/>
    </location>
</feature>
<feature type="site" description="Not N6-acetylated" evidence="5">
    <location>
        <position position="5"/>
    </location>
</feature>
<feature type="site" description="Not N6-methylated" evidence="5">
    <location>
        <position position="15"/>
    </location>
</feature>
<feature type="site" description="Not N6-methylated" evidence="5">
    <location>
        <position position="19"/>
    </location>
</feature>
<feature type="site" description="Not N6-methylated" evidence="5">
    <location>
        <position position="24"/>
    </location>
</feature>
<feature type="site" description="Not N6-acetylated" evidence="5">
    <location>
        <position position="36"/>
    </location>
</feature>
<feature type="site" description="Not N6-acetylated" evidence="5">
    <location>
        <position position="37"/>
    </location>
</feature>
<feature type="modified residue" description="N6-methyllysine" evidence="3 5">
    <location>
        <position position="5"/>
    </location>
</feature>
<feature type="modified residue" description="N6-acetyllysine; alternate" evidence="5">
    <location>
        <position position="10"/>
    </location>
</feature>
<feature type="modified residue" description="N6-methyllysine; alternate" evidence="4 5">
    <location>
        <position position="10"/>
    </location>
</feature>
<feature type="modified residue" description="Phosphoserine" evidence="1">
    <location>
        <position position="11"/>
    </location>
</feature>
<feature type="modified residue" description="Phosphothreonine" evidence="1">
    <location>
        <position position="12"/>
    </location>
</feature>
<feature type="modified residue" description="N6-acetyllysine" evidence="5">
    <location>
        <position position="15"/>
    </location>
</feature>
<feature type="modified residue" description="N6-acetyllysine" evidence="5">
    <location>
        <position position="19"/>
    </location>
</feature>
<feature type="modified residue" description="N6-acetyllysine" evidence="5">
    <location>
        <position position="24"/>
    </location>
</feature>
<feature type="modified residue" description="N6-acetyllysine; alternate" evidence="5">
    <location>
        <position position="28"/>
    </location>
</feature>
<feature type="modified residue" description="N6-methyllysine; alternate" evidence="5">
    <location>
        <position position="28"/>
    </location>
</feature>
<feature type="modified residue" description="N6-methyllysine" evidence="5">
    <location>
        <position position="36"/>
    </location>
</feature>
<feature type="modified residue" description="N6-methyllysine" evidence="5">
    <location>
        <position position="37"/>
    </location>
</feature>
<name>H33_CHLRE</name>
<dbReference type="EMBL" id="L41841">
    <property type="protein sequence ID" value="AAA99965.1"/>
    <property type="molecule type" value="Genomic_DNA"/>
</dbReference>
<dbReference type="PIR" id="S59123">
    <property type="entry name" value="S59123"/>
</dbReference>
<dbReference type="SMR" id="P50564"/>
<dbReference type="iPTMnet" id="P50564"/>
<dbReference type="GO" id="GO:0000786">
    <property type="term" value="C:nucleosome"/>
    <property type="evidence" value="ECO:0007669"/>
    <property type="project" value="UniProtKB-KW"/>
</dbReference>
<dbReference type="GO" id="GO:0005634">
    <property type="term" value="C:nucleus"/>
    <property type="evidence" value="ECO:0007669"/>
    <property type="project" value="UniProtKB-SubCell"/>
</dbReference>
<dbReference type="GO" id="GO:0003677">
    <property type="term" value="F:DNA binding"/>
    <property type="evidence" value="ECO:0007669"/>
    <property type="project" value="UniProtKB-KW"/>
</dbReference>
<dbReference type="GO" id="GO:0046982">
    <property type="term" value="F:protein heterodimerization activity"/>
    <property type="evidence" value="ECO:0007669"/>
    <property type="project" value="InterPro"/>
</dbReference>
<dbReference type="GO" id="GO:0030527">
    <property type="term" value="F:structural constituent of chromatin"/>
    <property type="evidence" value="ECO:0007669"/>
    <property type="project" value="InterPro"/>
</dbReference>
<dbReference type="CDD" id="cd22911">
    <property type="entry name" value="HFD_H3"/>
    <property type="match status" value="1"/>
</dbReference>
<dbReference type="FunFam" id="1.10.20.10:FF:000078">
    <property type="entry name" value="Histone H3"/>
    <property type="match status" value="1"/>
</dbReference>
<dbReference type="FunFam" id="1.10.20.10:FF:000044">
    <property type="entry name" value="Histone H3.3"/>
    <property type="match status" value="1"/>
</dbReference>
<dbReference type="Gene3D" id="1.10.20.10">
    <property type="entry name" value="Histone, subunit A"/>
    <property type="match status" value="1"/>
</dbReference>
<dbReference type="InterPro" id="IPR009072">
    <property type="entry name" value="Histone-fold"/>
</dbReference>
<dbReference type="InterPro" id="IPR007125">
    <property type="entry name" value="Histone_H2A/H2B/H3"/>
</dbReference>
<dbReference type="InterPro" id="IPR000164">
    <property type="entry name" value="Histone_H3/CENP-A"/>
</dbReference>
<dbReference type="PANTHER" id="PTHR11426">
    <property type="entry name" value="HISTONE H3"/>
    <property type="match status" value="1"/>
</dbReference>
<dbReference type="Pfam" id="PF00125">
    <property type="entry name" value="Histone"/>
    <property type="match status" value="1"/>
</dbReference>
<dbReference type="PRINTS" id="PR00622">
    <property type="entry name" value="HISTONEH3"/>
</dbReference>
<dbReference type="SMART" id="SM00428">
    <property type="entry name" value="H3"/>
    <property type="match status" value="1"/>
</dbReference>
<dbReference type="SUPFAM" id="SSF47113">
    <property type="entry name" value="Histone-fold"/>
    <property type="match status" value="1"/>
</dbReference>
<dbReference type="PROSITE" id="PS00322">
    <property type="entry name" value="HISTONE_H3_1"/>
    <property type="match status" value="1"/>
</dbReference>
<dbReference type="PROSITE" id="PS00959">
    <property type="entry name" value="HISTONE_H3_2"/>
    <property type="match status" value="1"/>
</dbReference>
<sequence length="135" mass="15260">MARTKQTARKSTGGKAPRKQLATKAARKTPATGGVKKPHRYRPGTVALREIRKYQKSTELLIRKLPFQRLVREIAQDFKTDLRFQSQAVVALQEAAEAYLVGLFEDTNLCAITAKRVTIMPKDIQLARRIRGERA</sequence>
<evidence type="ECO:0000250" key="1"/>
<evidence type="ECO:0000256" key="2">
    <source>
        <dbReference type="SAM" id="MobiDB-lite"/>
    </source>
</evidence>
<evidence type="ECO:0000269" key="3">
    <source>
    </source>
</evidence>
<evidence type="ECO:0000269" key="4">
    <source>
    </source>
</evidence>
<evidence type="ECO:0000269" key="5">
    <source>
    </source>
</evidence>
<evidence type="ECO:0000269" key="6">
    <source>
    </source>
</evidence>
<evidence type="ECO:0000305" key="7"/>
<protein>
    <recommendedName>
        <fullName>Histone H3 type 3</fullName>
    </recommendedName>
</protein>
<proteinExistence type="evidence at protein level"/>
<organism>
    <name type="scientific">Chlamydomonas reinhardtii</name>
    <name type="common">Chlamydomonas smithii</name>
    <dbReference type="NCBI Taxonomy" id="3055"/>
    <lineage>
        <taxon>Eukaryota</taxon>
        <taxon>Viridiplantae</taxon>
        <taxon>Chlorophyta</taxon>
        <taxon>core chlorophytes</taxon>
        <taxon>Chlorophyceae</taxon>
        <taxon>CS clade</taxon>
        <taxon>Chlamydomonadales</taxon>
        <taxon>Chlamydomonadaceae</taxon>
        <taxon>Chlamydomonas</taxon>
    </lineage>
</organism>
<accession>P50564</accession>
<keyword id="KW-0007">Acetylation</keyword>
<keyword id="KW-0158">Chromosome</keyword>
<keyword id="KW-0903">Direct protein sequencing</keyword>
<keyword id="KW-0238">DNA-binding</keyword>
<keyword id="KW-0488">Methylation</keyword>
<keyword id="KW-0544">Nucleosome core</keyword>
<keyword id="KW-0539">Nucleus</keyword>
<keyword id="KW-0597">Phosphoprotein</keyword>
<comment type="function">
    <text>Core component of nucleosome. Nucleosomes wrap and compact DNA into chromatin, limiting DNA accessibility to the cellular machineries which require DNA as a template. Histones thereby play a central role in transcription regulation, DNA repair, DNA replication and chromosomal stability. DNA accessibility is regulated via a complex set of post-translational modifications of histones, also called histone code, and nucleosome remodeling.</text>
</comment>
<comment type="subunit">
    <text>The nucleosome is a histone octamer containing two molecules each of H2A, H2B, H3 and H4 assembled in one H3-H4 heterotetramer and two H2A-H2B heterodimers. The octamer wraps approximately 147 bp of DNA.</text>
</comment>
<comment type="subcellular location">
    <subcellularLocation>
        <location evidence="1">Nucleus</location>
    </subcellularLocation>
    <subcellularLocation>
        <location evidence="1">Chromosome</location>
    </subcellularLocation>
</comment>
<comment type="PTM">
    <text evidence="5 6">Acetylation is generally linked to gene activation. Acetylated to form H3K9ac (11%), H3K14ac (17%), H3K18ac (11%), H3K23ac (16%) and H3K27ac (7%). H3K4, H3K35 and H3K36 are not acetylated. H3K4me prevents acetylation. 32% of the histone H3 are acetylated with, on average, 2.4 acetyl-Lys. They are all continuously deacatylated and re-acetylated with a half-life of approximately 2 minutes.</text>
</comment>
<comment type="PTM">
    <text evidence="3 4 5">Monomethylated to form H3K4me1 (81%), H3K9me1 (16%), H3K27me1 (25%), H3K35me1 (25%) and H3K36me1 (5%). No methylation at H3K14, H3K18 and H3K23. Methylated by a protein complex that includes Mut11. Set1 methylates specifically H3K4. H3K4me1 is associated with silenced euchromatin. Set3 forms H3K9me1, while H3K9me2 is undetected. H3K9me1 is specifically associated with silent, multi-copy transgenes.</text>
</comment>
<comment type="PTM">
    <text>No phosphorylation detected.</text>
</comment>
<comment type="similarity">
    <text evidence="7">Belongs to the histone H3 family.</text>
</comment>
<comment type="caution">
    <text evidence="7">To ensure consistency between histone entries, we follow the 'Brno' nomenclature for histone modifications, with positions referring to those used in the literature for the 'closest' model organism. Due to slight variations in histone sequences between organisms and to the presence of initiator methionine in UniProtKB/Swiss-Prot sequences, the actual positions of modified amino acids in the sequence generally differ. In this entry the following conventions are used: H3K4 = Lys-5; H3K4me = methylated Lys-5; H3K9ac = acetylated Lys-10; H3K9me = methylated Lys-10; H3S10ph = phosphorylated Ser-11; H3T11ph = phosphorylated Thr-12; H3K14 = Lys-15; H3K14ac = acetylated Lys-15; H3K18 = Lys-19; H3K18ac = acetylated Lys-19; H3K23 = Lys-24; H3K23ac = acetylated Lys-24; H3K27ac = acetylated Lys-28; H3K27me = methylated Lys-28; H3K35 = Lys-36; H3K35me = methylated Lys-36; H3K36 = Lys-37; H3K36me = methylated Lys-37.</text>
</comment>
<gene>
    <name type="primary">ch3-IV</name>
</gene>
<reference key="1">
    <citation type="journal article" date="1995" name="Nucleic Acids Res.">
        <title>The uni chromosome of Chlamydomonas: histone genes and nucleosome structure.</title>
        <authorList>
            <person name="Walther Z."/>
            <person name="Hall J.L."/>
        </authorList>
    </citation>
    <scope>NUCLEOTIDE SEQUENCE [GENOMIC DNA]</scope>
    <source>
        <strain>137c / CC-125</strain>
    </source>
</reference>
<reference key="2">
    <citation type="journal article" date="2005" name="Plant Cell">
        <title>Monomethyl histone H3 lysine 4 as an epigenetic mark for silenced euchromatin in Chlamydomonas.</title>
        <authorList>
            <person name="van Dijk K."/>
            <person name="Marley K.E."/>
            <person name="Jeong B.-R."/>
            <person name="Xu J."/>
            <person name="Hesson J."/>
            <person name="Cerny R.L."/>
            <person name="Waterborg J.H."/>
            <person name="Cerutti H."/>
        </authorList>
    </citation>
    <scope>PROTEIN SEQUENCE OF 2-16</scope>
    <scope>METHYLATION AT LYS-5</scope>
</reference>
<reference key="3">
    <citation type="journal article" date="1995" name="Plant Physiol.">
        <title>Histones of Chlamydomonas reinhardtii. Synthesis, acetylation, and methylation.</title>
        <authorList>
            <person name="Waterborg J.H."/>
            <person name="Robertson A.J."/>
            <person name="Tatar D.L."/>
            <person name="Borza C.M."/>
            <person name="Davie J.R."/>
        </authorList>
    </citation>
    <scope>PROTEIN SEQUENCE OF 2-49</scope>
    <scope>ACETYLATION AT LYS-10; LYS-15; LYS-19; LYS-24 AND LYS-28</scope>
    <scope>METHYLATION AT LYS-5; LYS-10; LYS-28; LYS-36 AND LYS-37</scope>
    <scope>LACK OF PHOSPHORYLATION</scope>
</reference>
<reference key="4">
    <citation type="journal article" date="1998" name="J. Biol. Chem.">
        <title>Dynamics of histone acetylation in Chlamydomonas reinhardtii.</title>
        <authorList>
            <person name="Waterborg J.H."/>
        </authorList>
    </citation>
    <scope>ACETYLATION</scope>
</reference>
<reference key="5">
    <citation type="journal article" date="2007" name="Nucleic Acids Res.">
        <title>SET3p monomethylates histone H3 on lysine 9 and is required for the silencing of tandemly repeated transgenes in Chlamydomonas.</title>
        <authorList>
            <person name="Casas-Mollano J.A."/>
            <person name="van Dijk K."/>
            <person name="Eisenhart J."/>
            <person name="Cerutti H."/>
        </authorList>
    </citation>
    <scope>METHYLATION AT LYS-10</scope>
</reference>